<sequence length="325" mass="35083">MTRYLARRLLNYLVLLALASFLTYCLTSLAFSPLESLMQRSPRPPQAVIDAKAHDLGLDRPILARYANWVSHAVRGDFGTTITGQPVGTELGRRIGVSLRLLVVGSVFGTVAGVVIGAWGAIRQYRLSDRVMTTLALLVLSTPTFVVANLLILGALRVNWAVGIQLFDYTGETSPGVAGGVWDRLGDRLQHLILPSLTLALAAAAGFSRYQRNAMLDVLGQDFIRTARAKGLTRRRALLKHGLRTALIPMATLFAYGVAGLVTGAVFVEKIFGWHGMGEWMVRGISTQDTNIVAAITVFSGAVVLLAGLLSDVIYAALDPRVRVS</sequence>
<proteinExistence type="inferred from homology"/>
<name>OPPB_MYCTO</name>
<evidence type="ECO:0000250" key="1">
    <source>
        <dbReference type="UniProtKB" id="P9WFZ7"/>
    </source>
</evidence>
<evidence type="ECO:0000255" key="2"/>
<evidence type="ECO:0000255" key="3">
    <source>
        <dbReference type="PROSITE-ProRule" id="PRU00441"/>
    </source>
</evidence>
<evidence type="ECO:0000305" key="4"/>
<comment type="function">
    <text evidence="1">Part of the ABC transporter complex OppABCD involved in the uptake of oligopeptides (By similarity). Responsible for the translocation of the substrate across the membrane (By similarity).</text>
</comment>
<comment type="subunit">
    <text evidence="1">The complex is composed of an ATP-binding protein (OppD), two transmembrane proteins (OppB and OppC) and a solute-binding protein (OppA).</text>
</comment>
<comment type="subcellular location">
    <subcellularLocation>
        <location evidence="1">Cell inner membrane</location>
        <topology evidence="1">Multi-pass membrane protein</topology>
    </subcellularLocation>
</comment>
<comment type="similarity">
    <text evidence="4">Belongs to the binding-protein-dependent transport system permease family. OppBC subfamily.</text>
</comment>
<accession>P9WFZ6</accession>
<accession>L0T8X5</accession>
<accession>P66966</accession>
<accession>Q10611</accession>
<gene>
    <name evidence="1" type="primary">oppB</name>
    <name type="ordered locus">MT1320</name>
</gene>
<organism>
    <name type="scientific">Mycobacterium tuberculosis (strain CDC 1551 / Oshkosh)</name>
    <dbReference type="NCBI Taxonomy" id="83331"/>
    <lineage>
        <taxon>Bacteria</taxon>
        <taxon>Bacillati</taxon>
        <taxon>Actinomycetota</taxon>
        <taxon>Actinomycetes</taxon>
        <taxon>Mycobacteriales</taxon>
        <taxon>Mycobacteriaceae</taxon>
        <taxon>Mycobacterium</taxon>
        <taxon>Mycobacterium tuberculosis complex</taxon>
    </lineage>
</organism>
<keyword id="KW-0997">Cell inner membrane</keyword>
<keyword id="KW-1003">Cell membrane</keyword>
<keyword id="KW-0472">Membrane</keyword>
<keyword id="KW-0571">Peptide transport</keyword>
<keyword id="KW-0653">Protein transport</keyword>
<keyword id="KW-1185">Reference proteome</keyword>
<keyword id="KW-0812">Transmembrane</keyword>
<keyword id="KW-1133">Transmembrane helix</keyword>
<keyword id="KW-0813">Transport</keyword>
<feature type="chain" id="PRO_0000428450" description="Oligopeptide transport system permease protein OppB">
    <location>
        <begin position="1"/>
        <end position="325"/>
    </location>
</feature>
<feature type="transmembrane region" description="Helical" evidence="2">
    <location>
        <begin position="12"/>
        <end position="32"/>
    </location>
</feature>
<feature type="transmembrane region" description="Helical" evidence="2">
    <location>
        <begin position="102"/>
        <end position="122"/>
    </location>
</feature>
<feature type="transmembrane region" description="Helical" evidence="2">
    <location>
        <begin position="135"/>
        <end position="155"/>
    </location>
</feature>
<feature type="transmembrane region" description="Helical" evidence="2">
    <location>
        <begin position="189"/>
        <end position="208"/>
    </location>
</feature>
<feature type="transmembrane region" description="Helical" evidence="2">
    <location>
        <begin position="248"/>
        <end position="268"/>
    </location>
</feature>
<feature type="transmembrane region" description="Helical" evidence="2">
    <location>
        <begin position="290"/>
        <end position="310"/>
    </location>
</feature>
<feature type="domain" description="ABC transmembrane type-1" evidence="3">
    <location>
        <begin position="102"/>
        <end position="310"/>
    </location>
</feature>
<dbReference type="EMBL" id="AE000516">
    <property type="protein sequence ID" value="AAK45581.1"/>
    <property type="molecule type" value="Genomic_DNA"/>
</dbReference>
<dbReference type="PIR" id="G70771">
    <property type="entry name" value="G70771"/>
</dbReference>
<dbReference type="RefSeq" id="WP_003406613.1">
    <property type="nucleotide sequence ID" value="NZ_KK341227.1"/>
</dbReference>
<dbReference type="SMR" id="P9WFZ6"/>
<dbReference type="KEGG" id="mtc:MT1320"/>
<dbReference type="PATRIC" id="fig|83331.31.peg.1426"/>
<dbReference type="HOGENOM" id="CLU_036879_1_2_11"/>
<dbReference type="Proteomes" id="UP000001020">
    <property type="component" value="Chromosome"/>
</dbReference>
<dbReference type="GO" id="GO:0005886">
    <property type="term" value="C:plasma membrane"/>
    <property type="evidence" value="ECO:0007669"/>
    <property type="project" value="UniProtKB-SubCell"/>
</dbReference>
<dbReference type="GO" id="GO:0015833">
    <property type="term" value="P:peptide transport"/>
    <property type="evidence" value="ECO:0007669"/>
    <property type="project" value="UniProtKB-KW"/>
</dbReference>
<dbReference type="GO" id="GO:0015031">
    <property type="term" value="P:protein transport"/>
    <property type="evidence" value="ECO:0007669"/>
    <property type="project" value="UniProtKB-KW"/>
</dbReference>
<dbReference type="GO" id="GO:0055085">
    <property type="term" value="P:transmembrane transport"/>
    <property type="evidence" value="ECO:0007669"/>
    <property type="project" value="InterPro"/>
</dbReference>
<dbReference type="CDD" id="cd06261">
    <property type="entry name" value="TM_PBP2"/>
    <property type="match status" value="1"/>
</dbReference>
<dbReference type="FunFam" id="1.10.3720.10:FF:000111">
    <property type="entry name" value="Peptide ABC transporter permease protein"/>
    <property type="match status" value="1"/>
</dbReference>
<dbReference type="Gene3D" id="1.10.3720.10">
    <property type="entry name" value="MetI-like"/>
    <property type="match status" value="1"/>
</dbReference>
<dbReference type="InterPro" id="IPR045621">
    <property type="entry name" value="BPD_transp_1_N"/>
</dbReference>
<dbReference type="InterPro" id="IPR000515">
    <property type="entry name" value="MetI-like"/>
</dbReference>
<dbReference type="InterPro" id="IPR035906">
    <property type="entry name" value="MetI-like_sf"/>
</dbReference>
<dbReference type="PANTHER" id="PTHR43163">
    <property type="entry name" value="DIPEPTIDE TRANSPORT SYSTEM PERMEASE PROTEIN DPPB-RELATED"/>
    <property type="match status" value="1"/>
</dbReference>
<dbReference type="PANTHER" id="PTHR43163:SF7">
    <property type="entry name" value="DIPEPTIDE-TRANSPORT INTEGRAL MEMBRANE PROTEIN ABC TRANSPORTER DPPB-RELATED"/>
    <property type="match status" value="1"/>
</dbReference>
<dbReference type="Pfam" id="PF00528">
    <property type="entry name" value="BPD_transp_1"/>
    <property type="match status" value="1"/>
</dbReference>
<dbReference type="Pfam" id="PF19300">
    <property type="entry name" value="BPD_transp_1_N"/>
    <property type="match status" value="1"/>
</dbReference>
<dbReference type="SUPFAM" id="SSF161098">
    <property type="entry name" value="MetI-like"/>
    <property type="match status" value="1"/>
</dbReference>
<dbReference type="PROSITE" id="PS50928">
    <property type="entry name" value="ABC_TM1"/>
    <property type="match status" value="1"/>
</dbReference>
<reference key="1">
    <citation type="journal article" date="2002" name="J. Bacteriol.">
        <title>Whole-genome comparison of Mycobacterium tuberculosis clinical and laboratory strains.</title>
        <authorList>
            <person name="Fleischmann R.D."/>
            <person name="Alland D."/>
            <person name="Eisen J.A."/>
            <person name="Carpenter L."/>
            <person name="White O."/>
            <person name="Peterson J.D."/>
            <person name="DeBoy R.T."/>
            <person name="Dodson R.J."/>
            <person name="Gwinn M.L."/>
            <person name="Haft D.H."/>
            <person name="Hickey E.K."/>
            <person name="Kolonay J.F."/>
            <person name="Nelson W.C."/>
            <person name="Umayam L.A."/>
            <person name="Ermolaeva M.D."/>
            <person name="Salzberg S.L."/>
            <person name="Delcher A."/>
            <person name="Utterback T.R."/>
            <person name="Weidman J.F."/>
            <person name="Khouri H.M."/>
            <person name="Gill J."/>
            <person name="Mikula A."/>
            <person name="Bishai W."/>
            <person name="Jacobs W.R. Jr."/>
            <person name="Venter J.C."/>
            <person name="Fraser C.M."/>
        </authorList>
    </citation>
    <scope>NUCLEOTIDE SEQUENCE [LARGE SCALE GENOMIC DNA]</scope>
    <source>
        <strain>CDC 1551 / Oshkosh</strain>
    </source>
</reference>
<protein>
    <recommendedName>
        <fullName evidence="1">Oligopeptide transport system permease protein OppB</fullName>
    </recommendedName>
</protein>